<keyword id="KW-0002">3D-structure</keyword>
<keyword id="KW-1003">Cell membrane</keyword>
<keyword id="KW-0903">Direct protein sequencing</keyword>
<keyword id="KW-1015">Disulfide bond</keyword>
<keyword id="KW-0325">Glycoprotein</keyword>
<keyword id="KW-0407">Ion channel</keyword>
<keyword id="KW-0406">Ion transport</keyword>
<keyword id="KW-1071">Ligand-gated ion channel</keyword>
<keyword id="KW-0472">Membrane</keyword>
<keyword id="KW-0597">Phosphoprotein</keyword>
<keyword id="KW-0628">Postsynaptic cell membrane</keyword>
<keyword id="KW-0675">Receptor</keyword>
<keyword id="KW-0732">Signal</keyword>
<keyword id="KW-0770">Synapse</keyword>
<keyword id="KW-0812">Transmembrane</keyword>
<keyword id="KW-1133">Transmembrane helix</keyword>
<keyword id="KW-0813">Transport</keyword>
<protein>
    <recommendedName>
        <fullName>Acetylcholine receptor subunit gamma</fullName>
    </recommendedName>
</protein>
<name>ACHG_TETCF</name>
<feature type="signal peptide">
    <location>
        <begin position="1"/>
        <end position="17"/>
    </location>
</feature>
<feature type="chain" id="PRO_0000000338" description="Acetylcholine receptor subunit gamma">
    <location>
        <begin position="18"/>
        <end position="506"/>
    </location>
</feature>
<feature type="topological domain" description="Extracellular">
    <location>
        <begin position="18"/>
        <end position="235"/>
    </location>
</feature>
<feature type="transmembrane region" description="Helical">
    <location>
        <begin position="236"/>
        <end position="260"/>
    </location>
</feature>
<feature type="transmembrane region" description="Helical">
    <location>
        <begin position="269"/>
        <end position="287"/>
    </location>
</feature>
<feature type="transmembrane region" description="Helical">
    <location>
        <begin position="303"/>
        <end position="324"/>
    </location>
</feature>
<feature type="topological domain" description="Cytoplasmic">
    <location>
        <begin position="325"/>
        <end position="466"/>
    </location>
</feature>
<feature type="transmembrane region" description="Helical">
    <location>
        <begin position="467"/>
        <end position="490"/>
    </location>
</feature>
<feature type="modified residue" description="Phosphotyrosine; by Tyr-kinases" evidence="3">
    <location>
        <position position="381"/>
    </location>
</feature>
<feature type="glycosylation site" description="N-linked (GlcNAc...) asparagine" evidence="2">
    <location>
        <position position="85"/>
    </location>
</feature>
<feature type="disulfide bond" evidence="4">
    <location>
        <begin position="145"/>
        <end position="159"/>
    </location>
</feature>
<feature type="sequence conflict" description="In Ref. 2; CAA24682." evidence="5" ref="2">
    <original>P</original>
    <variation>S</variation>
    <location>
        <position position="298"/>
    </location>
</feature>
<feature type="helix" evidence="6">
    <location>
        <begin position="20"/>
        <end position="28"/>
    </location>
</feature>
<feature type="turn" evidence="6">
    <location>
        <begin position="29"/>
        <end position="31"/>
    </location>
</feature>
<feature type="strand" evidence="8">
    <location>
        <begin position="40"/>
        <end position="43"/>
    </location>
</feature>
<feature type="strand" evidence="6">
    <location>
        <begin position="46"/>
        <end position="61"/>
    </location>
</feature>
<feature type="turn" evidence="6">
    <location>
        <begin position="62"/>
        <end position="65"/>
    </location>
</feature>
<feature type="strand" evidence="6">
    <location>
        <begin position="66"/>
        <end position="83"/>
    </location>
</feature>
<feature type="helix" evidence="6">
    <location>
        <begin position="86"/>
        <end position="89"/>
    </location>
</feature>
<feature type="strand" evidence="6">
    <location>
        <begin position="94"/>
        <end position="98"/>
    </location>
</feature>
<feature type="helix" evidence="6">
    <location>
        <begin position="99"/>
        <end position="101"/>
    </location>
</feature>
<feature type="strand" evidence="6">
    <location>
        <begin position="107"/>
        <end position="115"/>
    </location>
</feature>
<feature type="strand" evidence="6">
    <location>
        <begin position="124"/>
        <end position="128"/>
    </location>
</feature>
<feature type="strand" evidence="6">
    <location>
        <begin position="130"/>
        <end position="135"/>
    </location>
</feature>
<feature type="strand" evidence="6">
    <location>
        <begin position="138"/>
        <end position="144"/>
    </location>
</feature>
<feature type="turn" evidence="6">
    <location>
        <begin position="150"/>
        <end position="153"/>
    </location>
</feature>
<feature type="strand" evidence="6">
    <location>
        <begin position="156"/>
        <end position="167"/>
    </location>
</feature>
<feature type="turn" evidence="6">
    <location>
        <begin position="170"/>
        <end position="172"/>
    </location>
</feature>
<feature type="strand" evidence="6">
    <location>
        <begin position="173"/>
        <end position="177"/>
    </location>
</feature>
<feature type="strand" evidence="6">
    <location>
        <begin position="179"/>
        <end position="184"/>
    </location>
</feature>
<feature type="helix" evidence="6">
    <location>
        <begin position="192"/>
        <end position="194"/>
    </location>
</feature>
<feature type="strand" evidence="6">
    <location>
        <begin position="199"/>
        <end position="205"/>
    </location>
</feature>
<feature type="strand" evidence="6">
    <location>
        <begin position="207"/>
        <end position="212"/>
    </location>
</feature>
<feature type="strand" evidence="6">
    <location>
        <begin position="214"/>
        <end position="216"/>
    </location>
</feature>
<feature type="strand" evidence="6">
    <location>
        <begin position="220"/>
        <end position="234"/>
    </location>
</feature>
<feature type="helix" evidence="6">
    <location>
        <begin position="237"/>
        <end position="242"/>
    </location>
</feature>
<feature type="helix" evidence="6">
    <location>
        <begin position="244"/>
        <end position="253"/>
    </location>
</feature>
<feature type="helix" evidence="6">
    <location>
        <begin position="254"/>
        <end position="259"/>
    </location>
</feature>
<feature type="strand" evidence="6">
    <location>
        <begin position="262"/>
        <end position="264"/>
    </location>
</feature>
<feature type="helix" evidence="6">
    <location>
        <begin position="268"/>
        <end position="289"/>
    </location>
</feature>
<feature type="strand" evidence="7">
    <location>
        <begin position="294"/>
        <end position="296"/>
    </location>
</feature>
<feature type="helix" evidence="6">
    <location>
        <begin position="299"/>
        <end position="326"/>
    </location>
</feature>
<feature type="turn" evidence="6">
    <location>
        <begin position="329"/>
        <end position="331"/>
    </location>
</feature>
<feature type="helix" evidence="6">
    <location>
        <begin position="336"/>
        <end position="349"/>
    </location>
</feature>
<feature type="helix" evidence="6">
    <location>
        <begin position="438"/>
        <end position="488"/>
    </location>
</feature>
<feature type="strand" evidence="6">
    <location>
        <begin position="494"/>
        <end position="497"/>
    </location>
</feature>
<sequence>MVLTLLLIICLALEVRSENEEGRLIEKLLGDYDKRIIPAKTLDHIIDVTLKLTLTNLISLNEKEEALTTNVWIEIQWNDYRLSWNTSEYEGIDLVRIPSELLWLPDVVLENNVDGQFEVAYYANVLVYNDGSMYWLPPAIYRSTCPIAVTYFPFDWQNCSLVFRSQTYNAHEVNLQLSAEEGEAVEWIHIDPEDFTENGEWTIRHRPAKKNYNWQLTKDDTDFQEIIFFLIIQRKPLFYIINIIAPCVLISSLVVLVYFLPAQAGGQKCTLSISVLLAQTIFLFLIAQKVPETSLNVPLIGKYLIFVMFVSMLIVMNCVIVLNVSLRTPNTHSLSEKIKHLFLGFLPKYLGMQLEPSEETPEKPQPRRRSSFGIMIKAEEYILKKPRSELMFEEQKDRHGLKRVNKMTSDIDIGTTVDLYKDLANFAPEIKSCVEACNFIAKSTKEQNDSGSENENWVLIGKVIDKACFWIALLLFSIGTLAIFLTGHFNQVPEFPFPGDPRKYVP</sequence>
<evidence type="ECO:0000250" key="1">
    <source>
        <dbReference type="UniProtKB" id="P13536"/>
    </source>
</evidence>
<evidence type="ECO:0000255" key="2"/>
<evidence type="ECO:0000269" key="3">
    <source>
    </source>
</evidence>
<evidence type="ECO:0000269" key="4">
    <source>
    </source>
</evidence>
<evidence type="ECO:0000305" key="5"/>
<evidence type="ECO:0007829" key="6">
    <source>
        <dbReference type="PDB" id="7QL5"/>
    </source>
</evidence>
<evidence type="ECO:0007829" key="7">
    <source>
        <dbReference type="PDB" id="7SMT"/>
    </source>
</evidence>
<evidence type="ECO:0007829" key="8">
    <source>
        <dbReference type="PDB" id="8F6Y"/>
    </source>
</evidence>
<accession>P02714</accession>
<reference key="1">
    <citation type="journal article" date="1983" name="Nature">
        <title>Structural homology of Torpedo californica acetylcholine receptor subunits.</title>
        <authorList>
            <person name="Noda M."/>
            <person name="Takahashi H."/>
            <person name="Tanabe T."/>
            <person name="Toyosato M."/>
            <person name="Kikyotani S."/>
            <person name="Furutani Y."/>
            <person name="Hirose T."/>
            <person name="Takashima H."/>
            <person name="Inayama S."/>
            <person name="Miyata T."/>
            <person name="Numa S."/>
        </authorList>
    </citation>
    <scope>NUCLEOTIDE SEQUENCE [MRNA]</scope>
</reference>
<reference key="2">
    <citation type="journal article" date="1983" name="Proc. Natl. Acad. Sci. U.S.A.">
        <title>Nucleotide and deduced amino acid sequences of Torpedo californica acetylcholine receptor gamma subunit.</title>
        <authorList>
            <person name="Claudio T."/>
            <person name="Ballivet M."/>
            <person name="Patrick J."/>
            <person name="Heinemann S.F."/>
        </authorList>
    </citation>
    <scope>NUCLEOTIDE SEQUENCE [MRNA]</scope>
</reference>
<reference key="3">
    <citation type="journal article" date="1989" name="Biochemistry">
        <title>Assessment of the number of free cysteines and isolation and identification of cystine-containing peptides from acetylcholine receptor.</title>
        <authorList>
            <person name="Kellaris K.V."/>
            <person name="Ware D.K."/>
            <person name="Smith S."/>
            <person name="Kyte J."/>
        </authorList>
    </citation>
    <scope>PROTEIN SEQUENCE OF 123-147</scope>
    <scope>DISULFIDE BOND</scope>
</reference>
<reference key="4">
    <citation type="journal article" date="1991" name="J. Biol. Chem.">
        <title>Determination of the tyrosine phosphorylation sites of the nicotinic acetylcholine receptor.</title>
        <authorList>
            <person name="Wagner K."/>
            <person name="Edson K."/>
            <person name="Heginbotham L."/>
            <person name="Post M."/>
            <person name="Huganir R.L."/>
            <person name="Czernik A.J."/>
        </authorList>
    </citation>
    <scope>PHOSPHORYLATION AT TYR-381</scope>
</reference>
<organism>
    <name type="scientific">Tetronarce californica</name>
    <name type="common">Pacific electric ray</name>
    <name type="synonym">Torpedo californica</name>
    <dbReference type="NCBI Taxonomy" id="7787"/>
    <lineage>
        <taxon>Eukaryota</taxon>
        <taxon>Metazoa</taxon>
        <taxon>Chordata</taxon>
        <taxon>Craniata</taxon>
        <taxon>Vertebrata</taxon>
        <taxon>Chondrichthyes</taxon>
        <taxon>Elasmobranchii</taxon>
        <taxon>Batoidea</taxon>
        <taxon>Torpediniformes</taxon>
        <taxon>Torpedinidae</taxon>
        <taxon>Tetronarce</taxon>
    </lineage>
</organism>
<proteinExistence type="evidence at protein level"/>
<dbReference type="EMBL" id="V01393">
    <property type="protein sequence ID" value="CAA24682.1"/>
    <property type="molecule type" value="mRNA"/>
</dbReference>
<dbReference type="EMBL" id="V01394">
    <property type="protein sequence ID" value="CAA24683.1"/>
    <property type="molecule type" value="mRNA"/>
</dbReference>
<dbReference type="EMBL" id="J00966">
    <property type="protein sequence ID" value="AAA49276.1"/>
    <property type="molecule type" value="mRNA"/>
</dbReference>
<dbReference type="PIR" id="A93300">
    <property type="entry name" value="ACRYG1"/>
</dbReference>
<dbReference type="PDB" id="1OED">
    <property type="method" value="EM"/>
    <property type="resolution" value="4.00 A"/>
    <property type="chains" value="E=236-495"/>
</dbReference>
<dbReference type="PDB" id="6UWZ">
    <property type="method" value="EM"/>
    <property type="resolution" value="2.69 A"/>
    <property type="chains" value="E=18-506"/>
</dbReference>
<dbReference type="PDB" id="7QKO">
    <property type="method" value="EM"/>
    <property type="resolution" value="2.90 A"/>
    <property type="chains" value="E=18-506"/>
</dbReference>
<dbReference type="PDB" id="7QL5">
    <property type="method" value="EM"/>
    <property type="resolution" value="2.50 A"/>
    <property type="chains" value="E=18-506"/>
</dbReference>
<dbReference type="PDB" id="7QL6">
    <property type="method" value="EM"/>
    <property type="resolution" value="3.23 A"/>
    <property type="chains" value="E=18-506"/>
</dbReference>
<dbReference type="PDB" id="7SMM">
    <property type="method" value="EM"/>
    <property type="resolution" value="2.50 A"/>
    <property type="chains" value="E=18-506"/>
</dbReference>
<dbReference type="PDB" id="7SMQ">
    <property type="method" value="EM"/>
    <property type="resolution" value="2.70 A"/>
    <property type="chains" value="E=18-506"/>
</dbReference>
<dbReference type="PDB" id="7SMR">
    <property type="method" value="EM"/>
    <property type="resolution" value="2.77 A"/>
    <property type="chains" value="E=18-506"/>
</dbReference>
<dbReference type="PDB" id="7SMS">
    <property type="method" value="EM"/>
    <property type="resolution" value="3.18 A"/>
    <property type="chains" value="E=18-506"/>
</dbReference>
<dbReference type="PDB" id="7SMT">
    <property type="method" value="EM"/>
    <property type="resolution" value="2.56 A"/>
    <property type="chains" value="E=18-506"/>
</dbReference>
<dbReference type="PDB" id="7Z14">
    <property type="method" value="EM"/>
    <property type="resolution" value="3.15 A"/>
    <property type="chains" value="E=18-506"/>
</dbReference>
<dbReference type="PDB" id="8ESK">
    <property type="method" value="EM"/>
    <property type="resolution" value="2.90 A"/>
    <property type="chains" value="E=18-506"/>
</dbReference>
<dbReference type="PDB" id="8F2S">
    <property type="method" value="EM"/>
    <property type="resolution" value="2.90 A"/>
    <property type="chains" value="E=18-506"/>
</dbReference>
<dbReference type="PDB" id="8F6Y">
    <property type="method" value="EM"/>
    <property type="resolution" value="2.79 A"/>
    <property type="chains" value="E=18-506"/>
</dbReference>
<dbReference type="PDB" id="8F6Z">
    <property type="method" value="EM"/>
    <property type="resolution" value="2.70 A"/>
    <property type="chains" value="E=18-506"/>
</dbReference>
<dbReference type="PDB" id="8QQM">
    <property type="method" value="EM"/>
    <property type="resolution" value="4.70 A"/>
    <property type="chains" value="E=18-506"/>
</dbReference>
<dbReference type="PDBsum" id="1OED"/>
<dbReference type="PDBsum" id="6UWZ"/>
<dbReference type="PDBsum" id="7QKO"/>
<dbReference type="PDBsum" id="7QL5"/>
<dbReference type="PDBsum" id="7QL6"/>
<dbReference type="PDBsum" id="7SMM"/>
<dbReference type="PDBsum" id="7SMQ"/>
<dbReference type="PDBsum" id="7SMR"/>
<dbReference type="PDBsum" id="7SMS"/>
<dbReference type="PDBsum" id="7SMT"/>
<dbReference type="PDBsum" id="7Z14"/>
<dbReference type="PDBsum" id="8ESK"/>
<dbReference type="PDBsum" id="8F2S"/>
<dbReference type="PDBsum" id="8F6Y"/>
<dbReference type="PDBsum" id="8F6Z"/>
<dbReference type="PDBsum" id="8QQM"/>
<dbReference type="EMDB" id="EMD-14048"/>
<dbReference type="EMDB" id="EMD-14064"/>
<dbReference type="EMDB" id="EMD-14065"/>
<dbReference type="EMDB" id="EMD-14440"/>
<dbReference type="EMDB" id="EMD-18596"/>
<dbReference type="EMDB" id="EMD-20928"/>
<dbReference type="EMDB" id="EMD-25202"/>
<dbReference type="EMDB" id="EMD-25205"/>
<dbReference type="EMDB" id="EMD-25206"/>
<dbReference type="EMDB" id="EMD-25207"/>
<dbReference type="EMDB" id="EMD-25208"/>
<dbReference type="EMDB" id="EMD-28576"/>
<dbReference type="EMDB" id="EMD-28826"/>
<dbReference type="EMDB" id="EMD-28892"/>
<dbReference type="EMDB" id="EMD-28893"/>
<dbReference type="SMR" id="P02714"/>
<dbReference type="ComplexPortal" id="CPX-2187">
    <property type="entry name" value="Acetylcholine receptor, alpha1-beta1-gamma-delta"/>
</dbReference>
<dbReference type="IntAct" id="P02714">
    <property type="interactions" value="2"/>
</dbReference>
<dbReference type="BindingDB" id="P02714"/>
<dbReference type="ChEMBL" id="CHEMBL2096975"/>
<dbReference type="DrugCentral" id="P02714"/>
<dbReference type="TCDB" id="1.A.9.1.9">
    <property type="family name" value="the neurotransmitter receptor, cys loop, ligand-gated ion channel (lic) family"/>
</dbReference>
<dbReference type="GlyConnect" id="7">
    <property type="glycosylation" value="35 N-Linked glycans"/>
</dbReference>
<dbReference type="GlyCosmos" id="P02714">
    <property type="glycosylation" value="1 site, 66 glycans"/>
</dbReference>
<dbReference type="iPTMnet" id="P02714"/>
<dbReference type="SwissPalm" id="P02714"/>
<dbReference type="EvolutionaryTrace" id="P02714"/>
<dbReference type="GO" id="GO:0045211">
    <property type="term" value="C:postsynaptic membrane"/>
    <property type="evidence" value="ECO:0007669"/>
    <property type="project" value="UniProtKB-SubCell"/>
</dbReference>
<dbReference type="GO" id="GO:0022848">
    <property type="term" value="F:acetylcholine-gated monoatomic cation-selective channel activity"/>
    <property type="evidence" value="ECO:0007669"/>
    <property type="project" value="InterPro"/>
</dbReference>
<dbReference type="GO" id="GO:0004888">
    <property type="term" value="F:transmembrane signaling receptor activity"/>
    <property type="evidence" value="ECO:0007669"/>
    <property type="project" value="InterPro"/>
</dbReference>
<dbReference type="GO" id="GO:1904315">
    <property type="term" value="F:transmitter-gated monoatomic ion channel activity involved in regulation of postsynaptic membrane potential"/>
    <property type="evidence" value="ECO:0000250"/>
    <property type="project" value="UniProtKB"/>
</dbReference>
<dbReference type="CDD" id="cd19029">
    <property type="entry name" value="LGIC_ECD_nAChR_G"/>
    <property type="match status" value="1"/>
</dbReference>
<dbReference type="CDD" id="cd19064">
    <property type="entry name" value="LGIC_TM_nAChR"/>
    <property type="match status" value="1"/>
</dbReference>
<dbReference type="FunFam" id="1.20.58.390:FF:000048">
    <property type="entry name" value="Cholinergic receptor nicotinic epsilon subunit"/>
    <property type="match status" value="1"/>
</dbReference>
<dbReference type="FunFam" id="1.20.58.390:FF:000010">
    <property type="entry name" value="Nicotinic acetylcholine receptor subunit epsilon"/>
    <property type="match status" value="1"/>
</dbReference>
<dbReference type="FunFam" id="2.70.170.10:FF:000012">
    <property type="entry name" value="Nicotinic acetylcholine receptor subunit gamma"/>
    <property type="match status" value="1"/>
</dbReference>
<dbReference type="Gene3D" id="2.70.170.10">
    <property type="entry name" value="Neurotransmitter-gated ion-channel ligand-binding domain"/>
    <property type="match status" value="1"/>
</dbReference>
<dbReference type="Gene3D" id="1.20.58.390">
    <property type="entry name" value="Neurotransmitter-gated ion-channel transmembrane domain"/>
    <property type="match status" value="2"/>
</dbReference>
<dbReference type="InterPro" id="IPR006202">
    <property type="entry name" value="Neur_chan_lig-bd"/>
</dbReference>
<dbReference type="InterPro" id="IPR036734">
    <property type="entry name" value="Neur_chan_lig-bd_sf"/>
</dbReference>
<dbReference type="InterPro" id="IPR006201">
    <property type="entry name" value="Neur_channel"/>
</dbReference>
<dbReference type="InterPro" id="IPR036719">
    <property type="entry name" value="Neuro-gated_channel_TM_sf"/>
</dbReference>
<dbReference type="InterPro" id="IPR038050">
    <property type="entry name" value="Neuro_actylchol_rec"/>
</dbReference>
<dbReference type="InterPro" id="IPR006029">
    <property type="entry name" value="Neurotrans-gated_channel_TM"/>
</dbReference>
<dbReference type="InterPro" id="IPR018000">
    <property type="entry name" value="Neurotransmitter_ion_chnl_CS"/>
</dbReference>
<dbReference type="InterPro" id="IPR002394">
    <property type="entry name" value="Nicotinic_acetylcholine_rcpt"/>
</dbReference>
<dbReference type="PANTHER" id="PTHR18945">
    <property type="entry name" value="NEUROTRANSMITTER GATED ION CHANNEL"/>
    <property type="match status" value="1"/>
</dbReference>
<dbReference type="Pfam" id="PF02931">
    <property type="entry name" value="Neur_chan_LBD"/>
    <property type="match status" value="1"/>
</dbReference>
<dbReference type="Pfam" id="PF02932">
    <property type="entry name" value="Neur_chan_memb"/>
    <property type="match status" value="1"/>
</dbReference>
<dbReference type="PRINTS" id="PR00254">
    <property type="entry name" value="NICOTINICR"/>
</dbReference>
<dbReference type="PRINTS" id="PR00252">
    <property type="entry name" value="NRIONCHANNEL"/>
</dbReference>
<dbReference type="SUPFAM" id="SSF90112">
    <property type="entry name" value="Neurotransmitter-gated ion-channel transmembrane pore"/>
    <property type="match status" value="1"/>
</dbReference>
<dbReference type="SUPFAM" id="SSF63712">
    <property type="entry name" value="Nicotinic receptor ligand binding domain-like"/>
    <property type="match status" value="1"/>
</dbReference>
<dbReference type="PROSITE" id="PS00236">
    <property type="entry name" value="NEUROTR_ION_CHANNEL"/>
    <property type="match status" value="1"/>
</dbReference>
<comment type="function">
    <text>After binding acetylcholine, the AChR responds by an extensive change in conformation that affects all subunits and leads to opening of an ion-conducting channel across the plasma membrane.</text>
</comment>
<comment type="catalytic activity">
    <reaction evidence="1">
        <text>K(+)(in) = K(+)(out)</text>
        <dbReference type="Rhea" id="RHEA:29463"/>
        <dbReference type="ChEBI" id="CHEBI:29103"/>
    </reaction>
</comment>
<comment type="catalytic activity">
    <reaction evidence="1">
        <text>Na(+)(in) = Na(+)(out)</text>
        <dbReference type="Rhea" id="RHEA:34963"/>
        <dbReference type="ChEBI" id="CHEBI:29101"/>
    </reaction>
</comment>
<comment type="subunit">
    <text>Pentamer of two alpha chains, and one each of the beta, delta, and gamma chains.</text>
</comment>
<comment type="subcellular location">
    <subcellularLocation>
        <location>Postsynaptic cell membrane</location>
        <topology>Multi-pass membrane protein</topology>
    </subcellularLocation>
    <subcellularLocation>
        <location>Cell membrane</location>
        <topology>Multi-pass membrane protein</topology>
    </subcellularLocation>
</comment>
<comment type="PTM">
    <text>Seems not to be glycosylated on Asn-158.</text>
</comment>
<comment type="similarity">
    <text evidence="5">Belongs to the ligand-gated ion channel (TC 1.A.9) family. Acetylcholine receptor (TC 1.A.9.1) subfamily. Gamma/CHRNG sub-subfamily.</text>
</comment>
<gene>
    <name type="primary">CHRNG</name>
</gene>